<evidence type="ECO:0000255" key="1"/>
<evidence type="ECO:0000255" key="2">
    <source>
        <dbReference type="PROSITE-ProRule" id="PRU00031"/>
    </source>
</evidence>
<evidence type="ECO:0000255" key="3">
    <source>
        <dbReference type="PROSITE-ProRule" id="PRU00076"/>
    </source>
</evidence>
<evidence type="ECO:0000255" key="4">
    <source>
        <dbReference type="PROSITE-ProRule" id="PRU00122"/>
    </source>
</evidence>
<evidence type="ECO:0000255" key="5">
    <source>
        <dbReference type="PROSITE-ProRule" id="PRU00498"/>
    </source>
</evidence>
<evidence type="ECO:0000256" key="6">
    <source>
        <dbReference type="SAM" id="MobiDB-lite"/>
    </source>
</evidence>
<evidence type="ECO:0000269" key="7">
    <source>
    </source>
</evidence>
<evidence type="ECO:0000303" key="8">
    <source>
    </source>
</evidence>
<evidence type="ECO:0000305" key="9"/>
<evidence type="ECO:0000305" key="10">
    <source>
    </source>
</evidence>
<evidence type="ECO:0000312" key="11">
    <source>
        <dbReference type="FlyBase" id="FBgn0262870"/>
    </source>
</evidence>
<evidence type="ECO:0000312" key="12">
    <source>
        <dbReference type="Proteomes" id="UP000000803"/>
    </source>
</evidence>
<organism evidence="12">
    <name type="scientific">Drosophila melanogaster</name>
    <name type="common">Fruit fly</name>
    <dbReference type="NCBI Taxonomy" id="7227"/>
    <lineage>
        <taxon>Eukaryota</taxon>
        <taxon>Metazoa</taxon>
        <taxon>Ecdysozoa</taxon>
        <taxon>Arthropoda</taxon>
        <taxon>Hexapoda</taxon>
        <taxon>Insecta</taxon>
        <taxon>Pterygota</taxon>
        <taxon>Neoptera</taxon>
        <taxon>Endopterygota</taxon>
        <taxon>Diptera</taxon>
        <taxon>Brachycera</taxon>
        <taxon>Muscomorpha</taxon>
        <taxon>Ephydroidea</taxon>
        <taxon>Drosophilidae</taxon>
        <taxon>Drosophila</taxon>
        <taxon>Sophophora</taxon>
    </lineage>
</organism>
<name>AXO_DROME</name>
<keyword id="KW-0025">Alternative splicing</keyword>
<keyword id="KW-0966">Cell projection</keyword>
<keyword id="KW-1015">Disulfide bond</keyword>
<keyword id="KW-0245">EGF-like domain</keyword>
<keyword id="KW-0325">Glycoprotein</keyword>
<keyword id="KW-0472">Membrane</keyword>
<keyword id="KW-0646">Protease inhibitor</keyword>
<keyword id="KW-1185">Reference proteome</keyword>
<keyword id="KW-0677">Repeat</keyword>
<keyword id="KW-0722">Serine protease inhibitor</keyword>
<keyword id="KW-0732">Signal</keyword>
<keyword id="KW-0812">Transmembrane</keyword>
<keyword id="KW-1133">Transmembrane helix</keyword>
<proteinExistence type="evidence at protein level"/>
<dbReference type="EMBL" id="AE014296">
    <property type="protein sequence ID" value="AAF47929.4"/>
    <property type="molecule type" value="Genomic_DNA"/>
</dbReference>
<dbReference type="EMBL" id="AE014296">
    <property type="protein sequence ID" value="AFH04301.1"/>
    <property type="molecule type" value="Genomic_DNA"/>
</dbReference>
<dbReference type="EMBL" id="AE014296">
    <property type="protein sequence ID" value="AFH04302.1"/>
    <property type="molecule type" value="Genomic_DNA"/>
</dbReference>
<dbReference type="EMBL" id="AE014296">
    <property type="protein sequence ID" value="AFH04303.1"/>
    <property type="molecule type" value="Genomic_DNA"/>
</dbReference>
<dbReference type="EMBL" id="AE014296">
    <property type="protein sequence ID" value="AGB94117.1"/>
    <property type="molecule type" value="Genomic_DNA"/>
</dbReference>
<dbReference type="EMBL" id="AE014296">
    <property type="protein sequence ID" value="AGB94118.1"/>
    <property type="molecule type" value="Genomic_DNA"/>
</dbReference>
<dbReference type="EMBL" id="AE014296">
    <property type="protein sequence ID" value="AGB94119.1"/>
    <property type="molecule type" value="Genomic_DNA"/>
</dbReference>
<dbReference type="RefSeq" id="NP_001246630.1">
    <molecule id="M9PE65-2"/>
    <property type="nucleotide sequence ID" value="NM_001259701.1"/>
</dbReference>
<dbReference type="RefSeq" id="NP_001246631.1">
    <molecule id="M9PE65-1"/>
    <property type="nucleotide sequence ID" value="NM_001259702.1"/>
</dbReference>
<dbReference type="RefSeq" id="NP_001246632.1">
    <molecule id="M9PE65-3"/>
    <property type="nucleotide sequence ID" value="NM_001259703.1"/>
</dbReference>
<dbReference type="RefSeq" id="NP_001261422.1">
    <molecule id="M9PE65-4"/>
    <property type="nucleotide sequence ID" value="NM_001274493.1"/>
</dbReference>
<dbReference type="RefSeq" id="NP_001261423.1">
    <molecule id="M9PE65-1"/>
    <property type="nucleotide sequence ID" value="NM_001274494.1"/>
</dbReference>
<dbReference type="RefSeq" id="NP_001261424.1">
    <molecule id="M9PE65-3"/>
    <property type="nucleotide sequence ID" value="NM_001274495.1"/>
</dbReference>
<dbReference type="RefSeq" id="NP_524656.5">
    <molecule id="M9PE65-5"/>
    <property type="nucleotide sequence ID" value="NM_079917.5"/>
</dbReference>
<dbReference type="SMR" id="M9PE65"/>
<dbReference type="FunCoup" id="M9PE65">
    <property type="interactions" value="57"/>
</dbReference>
<dbReference type="IntAct" id="M9PE65">
    <property type="interactions" value="6"/>
</dbReference>
<dbReference type="STRING" id="7227.FBpp0305769"/>
<dbReference type="MEROPS" id="I02.968"/>
<dbReference type="GlyCosmos" id="M9PE65">
    <property type="glycosylation" value="16 sites, No reported glycans"/>
</dbReference>
<dbReference type="GlyGen" id="M9PE65">
    <property type="glycosylation" value="17 sites"/>
</dbReference>
<dbReference type="PaxDb" id="7227-FBpp0305769"/>
<dbReference type="EnsemblMetazoa" id="FBtr0302646">
    <molecule id="M9PE65-2"/>
    <property type="protein sequence ID" value="FBpp0291786"/>
    <property type="gene ID" value="FBgn0262870"/>
</dbReference>
<dbReference type="EnsemblMetazoa" id="FBtr0306206">
    <molecule id="M9PE65-1"/>
    <property type="protein sequence ID" value="FBpp0297315"/>
    <property type="gene ID" value="FBgn0262870"/>
</dbReference>
<dbReference type="EnsemblMetazoa" id="FBtr0306207">
    <molecule id="M9PE65-3"/>
    <property type="protein sequence ID" value="FBpp0297316"/>
    <property type="gene ID" value="FBgn0262870"/>
</dbReference>
<dbReference type="EnsemblMetazoa" id="FBtr0333591">
    <molecule id="M9PE65-4"/>
    <property type="protein sequence ID" value="FBpp0305768"/>
    <property type="gene ID" value="FBgn0262870"/>
</dbReference>
<dbReference type="EnsemblMetazoa" id="FBtr0333592">
    <molecule id="M9PE65-1"/>
    <property type="protein sequence ID" value="FBpp0305769"/>
    <property type="gene ID" value="FBgn0262870"/>
</dbReference>
<dbReference type="EnsemblMetazoa" id="FBtr0333593">
    <molecule id="M9PE65-3"/>
    <property type="protein sequence ID" value="FBpp0305770"/>
    <property type="gene ID" value="FBgn0262870"/>
</dbReference>
<dbReference type="EnsemblMetazoa" id="FBtr0333594">
    <molecule id="M9PE65-5"/>
    <property type="protein sequence ID" value="FBpp0305771"/>
    <property type="gene ID" value="FBgn0262870"/>
</dbReference>
<dbReference type="GeneID" id="43923"/>
<dbReference type="KEGG" id="dme:Dmel_CG43225"/>
<dbReference type="UCSC" id="CG18296-RA">
    <property type="organism name" value="d. melanogaster"/>
</dbReference>
<dbReference type="AGR" id="FB:FBgn0262870"/>
<dbReference type="CTD" id="43923"/>
<dbReference type="FlyBase" id="FBgn0262870">
    <property type="gene designation" value="axo"/>
</dbReference>
<dbReference type="VEuPathDB" id="VectorBase:FBgn0262870"/>
<dbReference type="eggNOG" id="KOG3516">
    <property type="taxonomic scope" value="Eukaryota"/>
</dbReference>
<dbReference type="eggNOG" id="KOG4295">
    <property type="taxonomic scope" value="Eukaryota"/>
</dbReference>
<dbReference type="HOGENOM" id="CLU_002286_0_0_1"/>
<dbReference type="InParanoid" id="M9PE65"/>
<dbReference type="OMA" id="YDCIKAP"/>
<dbReference type="OrthoDB" id="5989513at2759"/>
<dbReference type="PhylomeDB" id="M9PE65"/>
<dbReference type="BioGRID-ORCS" id="43923">
    <property type="hits" value="0 hits in 1 CRISPR screen"/>
</dbReference>
<dbReference type="GenomeRNAi" id="43923"/>
<dbReference type="PRO" id="PR:M9PE65"/>
<dbReference type="Proteomes" id="UP000000803">
    <property type="component" value="Chromosome 3L"/>
</dbReference>
<dbReference type="Bgee" id="FBgn0262870">
    <property type="expression patterns" value="Expressed in adult Malpighian tubule stellate cell of main segment in Malpighian tubule and 115 other cell types or tissues"/>
</dbReference>
<dbReference type="ExpressionAtlas" id="M9PE65">
    <property type="expression patterns" value="baseline and differential"/>
</dbReference>
<dbReference type="GO" id="GO:0030424">
    <property type="term" value="C:axon"/>
    <property type="evidence" value="ECO:0007669"/>
    <property type="project" value="UniProtKB-SubCell"/>
</dbReference>
<dbReference type="GO" id="GO:0016020">
    <property type="term" value="C:membrane"/>
    <property type="evidence" value="ECO:0007669"/>
    <property type="project" value="UniProtKB-SubCell"/>
</dbReference>
<dbReference type="GO" id="GO:0004867">
    <property type="term" value="F:serine-type endopeptidase inhibitor activity"/>
    <property type="evidence" value="ECO:0007669"/>
    <property type="project" value="UniProtKB-KW"/>
</dbReference>
<dbReference type="GO" id="GO:0019226">
    <property type="term" value="P:transmission of nerve impulse"/>
    <property type="evidence" value="ECO:0000315"/>
    <property type="project" value="FlyBase"/>
</dbReference>
<dbReference type="CDD" id="cd00054">
    <property type="entry name" value="EGF_CA"/>
    <property type="match status" value="3"/>
</dbReference>
<dbReference type="CDD" id="cd00109">
    <property type="entry name" value="Kunitz-type"/>
    <property type="match status" value="1"/>
</dbReference>
<dbReference type="CDD" id="cd00110">
    <property type="entry name" value="LamG"/>
    <property type="match status" value="4"/>
</dbReference>
<dbReference type="FunFam" id="2.10.25.10:FF:000459">
    <property type="entry name" value="Axotactin, isoform B"/>
    <property type="match status" value="1"/>
</dbReference>
<dbReference type="FunFam" id="2.60.120.1000:FF:000009">
    <property type="entry name" value="Axotactin, isoform B"/>
    <property type="match status" value="1"/>
</dbReference>
<dbReference type="FunFam" id="2.60.120.200:FF:000100">
    <property type="entry name" value="Axotactin, isoform B"/>
    <property type="match status" value="1"/>
</dbReference>
<dbReference type="FunFam" id="2.60.120.200:FF:000120">
    <property type="entry name" value="Axotactin, isoform B"/>
    <property type="match status" value="1"/>
</dbReference>
<dbReference type="FunFam" id="2.60.120.200:FF:000146">
    <property type="entry name" value="Axotactin, isoform B"/>
    <property type="match status" value="1"/>
</dbReference>
<dbReference type="FunFam" id="2.60.120.200:FF:000212">
    <property type="entry name" value="Axotactin, isoform B"/>
    <property type="match status" value="1"/>
</dbReference>
<dbReference type="FunFam" id="2.60.120.200:FF:000221">
    <property type="entry name" value="Axotactin, isoform B"/>
    <property type="match status" value="1"/>
</dbReference>
<dbReference type="FunFam" id="2.60.120.200:FF:000169">
    <property type="entry name" value="Uncharacterized protein, isoform C"/>
    <property type="match status" value="1"/>
</dbReference>
<dbReference type="Gene3D" id="2.60.120.1000">
    <property type="match status" value="1"/>
</dbReference>
<dbReference type="Gene3D" id="2.60.120.200">
    <property type="match status" value="6"/>
</dbReference>
<dbReference type="Gene3D" id="2.10.25.10">
    <property type="entry name" value="Laminin"/>
    <property type="match status" value="3"/>
</dbReference>
<dbReference type="Gene3D" id="4.10.410.10">
    <property type="entry name" value="Pancreatic trypsin inhibitor Kunitz domain"/>
    <property type="match status" value="1"/>
</dbReference>
<dbReference type="InterPro" id="IPR013320">
    <property type="entry name" value="ConA-like_dom_sf"/>
</dbReference>
<dbReference type="InterPro" id="IPR000742">
    <property type="entry name" value="EGF-like_dom"/>
</dbReference>
<dbReference type="InterPro" id="IPR002223">
    <property type="entry name" value="Kunitz_BPTI"/>
</dbReference>
<dbReference type="InterPro" id="IPR036880">
    <property type="entry name" value="Kunitz_BPTI_sf"/>
</dbReference>
<dbReference type="InterPro" id="IPR001791">
    <property type="entry name" value="Laminin_G"/>
</dbReference>
<dbReference type="InterPro" id="IPR050372">
    <property type="entry name" value="Neurexin-related_CASP"/>
</dbReference>
<dbReference type="PANTHER" id="PTHR15036:SF49">
    <property type="entry name" value="AXOTACTIN"/>
    <property type="match status" value="1"/>
</dbReference>
<dbReference type="PANTHER" id="PTHR15036">
    <property type="entry name" value="PIKACHURIN-LIKE PROTEIN"/>
    <property type="match status" value="1"/>
</dbReference>
<dbReference type="Pfam" id="PF00014">
    <property type="entry name" value="Kunitz_BPTI"/>
    <property type="match status" value="1"/>
</dbReference>
<dbReference type="Pfam" id="PF02210">
    <property type="entry name" value="Laminin_G_2"/>
    <property type="match status" value="6"/>
</dbReference>
<dbReference type="SMART" id="SM00181">
    <property type="entry name" value="EGF"/>
    <property type="match status" value="4"/>
</dbReference>
<dbReference type="SMART" id="SM00131">
    <property type="entry name" value="KU"/>
    <property type="match status" value="1"/>
</dbReference>
<dbReference type="SMART" id="SM00282">
    <property type="entry name" value="LamG"/>
    <property type="match status" value="6"/>
</dbReference>
<dbReference type="SUPFAM" id="SSF57362">
    <property type="entry name" value="BPTI-like"/>
    <property type="match status" value="1"/>
</dbReference>
<dbReference type="SUPFAM" id="SSF49899">
    <property type="entry name" value="Concanavalin A-like lectins/glucanases"/>
    <property type="match status" value="6"/>
</dbReference>
<dbReference type="PROSITE" id="PS50279">
    <property type="entry name" value="BPTI_KUNITZ_2"/>
    <property type="match status" value="1"/>
</dbReference>
<dbReference type="PROSITE" id="PS01186">
    <property type="entry name" value="EGF_2"/>
    <property type="match status" value="1"/>
</dbReference>
<dbReference type="PROSITE" id="PS50026">
    <property type="entry name" value="EGF_3"/>
    <property type="match status" value="4"/>
</dbReference>
<dbReference type="PROSITE" id="PS50025">
    <property type="entry name" value="LAM_G_DOMAIN"/>
    <property type="match status" value="6"/>
</dbReference>
<gene>
    <name evidence="8 11" type="primary">axo</name>
    <name evidence="11" type="synonym">CG13715</name>
    <name evidence="11" type="synonym">CG13717</name>
    <name evidence="11" type="synonym">CG18296</name>
    <name evidence="11" type="synonym">CG32234</name>
    <name evidence="11" type="synonym">CG42664</name>
    <name evidence="11" type="synonym">CT1277</name>
    <name evidence="11" type="ORF">CG43225</name>
</gene>
<reference evidence="12" key="1">
    <citation type="journal article" date="2000" name="Science">
        <title>The genome sequence of Drosophila melanogaster.</title>
        <authorList>
            <person name="Adams M.D."/>
            <person name="Celniker S.E."/>
            <person name="Holt R.A."/>
            <person name="Evans C.A."/>
            <person name="Gocayne J.D."/>
            <person name="Amanatides P.G."/>
            <person name="Scherer S.E."/>
            <person name="Li P.W."/>
            <person name="Hoskins R.A."/>
            <person name="Galle R.F."/>
            <person name="George R.A."/>
            <person name="Lewis S.E."/>
            <person name="Richards S."/>
            <person name="Ashburner M."/>
            <person name="Henderson S.N."/>
            <person name="Sutton G.G."/>
            <person name="Wortman J.R."/>
            <person name="Yandell M.D."/>
            <person name="Zhang Q."/>
            <person name="Chen L.X."/>
            <person name="Brandon R.C."/>
            <person name="Rogers Y.-H.C."/>
            <person name="Blazej R.G."/>
            <person name="Champe M."/>
            <person name="Pfeiffer B.D."/>
            <person name="Wan K.H."/>
            <person name="Doyle C."/>
            <person name="Baxter E.G."/>
            <person name="Helt G."/>
            <person name="Nelson C.R."/>
            <person name="Miklos G.L.G."/>
            <person name="Abril J.F."/>
            <person name="Agbayani A."/>
            <person name="An H.-J."/>
            <person name="Andrews-Pfannkoch C."/>
            <person name="Baldwin D."/>
            <person name="Ballew R.M."/>
            <person name="Basu A."/>
            <person name="Baxendale J."/>
            <person name="Bayraktaroglu L."/>
            <person name="Beasley E.M."/>
            <person name="Beeson K.Y."/>
            <person name="Benos P.V."/>
            <person name="Berman B.P."/>
            <person name="Bhandari D."/>
            <person name="Bolshakov S."/>
            <person name="Borkova D."/>
            <person name="Botchan M.R."/>
            <person name="Bouck J."/>
            <person name="Brokstein P."/>
            <person name="Brottier P."/>
            <person name="Burtis K.C."/>
            <person name="Busam D.A."/>
            <person name="Butler H."/>
            <person name="Cadieu E."/>
            <person name="Center A."/>
            <person name="Chandra I."/>
            <person name="Cherry J.M."/>
            <person name="Cawley S."/>
            <person name="Dahlke C."/>
            <person name="Davenport L.B."/>
            <person name="Davies P."/>
            <person name="de Pablos B."/>
            <person name="Delcher A."/>
            <person name="Deng Z."/>
            <person name="Mays A.D."/>
            <person name="Dew I."/>
            <person name="Dietz S.M."/>
            <person name="Dodson K."/>
            <person name="Doup L.E."/>
            <person name="Downes M."/>
            <person name="Dugan-Rocha S."/>
            <person name="Dunkov B.C."/>
            <person name="Dunn P."/>
            <person name="Durbin K.J."/>
            <person name="Evangelista C.C."/>
            <person name="Ferraz C."/>
            <person name="Ferriera S."/>
            <person name="Fleischmann W."/>
            <person name="Fosler C."/>
            <person name="Gabrielian A.E."/>
            <person name="Garg N.S."/>
            <person name="Gelbart W.M."/>
            <person name="Glasser K."/>
            <person name="Glodek A."/>
            <person name="Gong F."/>
            <person name="Gorrell J.H."/>
            <person name="Gu Z."/>
            <person name="Guan P."/>
            <person name="Harris M."/>
            <person name="Harris N.L."/>
            <person name="Harvey D.A."/>
            <person name="Heiman T.J."/>
            <person name="Hernandez J.R."/>
            <person name="Houck J."/>
            <person name="Hostin D."/>
            <person name="Houston K.A."/>
            <person name="Howland T.J."/>
            <person name="Wei M.-H."/>
            <person name="Ibegwam C."/>
            <person name="Jalali M."/>
            <person name="Kalush F."/>
            <person name="Karpen G.H."/>
            <person name="Ke Z."/>
            <person name="Kennison J.A."/>
            <person name="Ketchum K.A."/>
            <person name="Kimmel B.E."/>
            <person name="Kodira C.D."/>
            <person name="Kraft C.L."/>
            <person name="Kravitz S."/>
            <person name="Kulp D."/>
            <person name="Lai Z."/>
            <person name="Lasko P."/>
            <person name="Lei Y."/>
            <person name="Levitsky A.A."/>
            <person name="Li J.H."/>
            <person name="Li Z."/>
            <person name="Liang Y."/>
            <person name="Lin X."/>
            <person name="Liu X."/>
            <person name="Mattei B."/>
            <person name="McIntosh T.C."/>
            <person name="McLeod M.P."/>
            <person name="McPherson D."/>
            <person name="Merkulov G."/>
            <person name="Milshina N.V."/>
            <person name="Mobarry C."/>
            <person name="Morris J."/>
            <person name="Moshrefi A."/>
            <person name="Mount S.M."/>
            <person name="Moy M."/>
            <person name="Murphy B."/>
            <person name="Murphy L."/>
            <person name="Muzny D.M."/>
            <person name="Nelson D.L."/>
            <person name="Nelson D.R."/>
            <person name="Nelson K.A."/>
            <person name="Nixon K."/>
            <person name="Nusskern D.R."/>
            <person name="Pacleb J.M."/>
            <person name="Palazzolo M."/>
            <person name="Pittman G.S."/>
            <person name="Pan S."/>
            <person name="Pollard J."/>
            <person name="Puri V."/>
            <person name="Reese M.G."/>
            <person name="Reinert K."/>
            <person name="Remington K."/>
            <person name="Saunders R.D.C."/>
            <person name="Scheeler F."/>
            <person name="Shen H."/>
            <person name="Shue B.C."/>
            <person name="Siden-Kiamos I."/>
            <person name="Simpson M."/>
            <person name="Skupski M.P."/>
            <person name="Smith T.J."/>
            <person name="Spier E."/>
            <person name="Spradling A.C."/>
            <person name="Stapleton M."/>
            <person name="Strong R."/>
            <person name="Sun E."/>
            <person name="Svirskas R."/>
            <person name="Tector C."/>
            <person name="Turner R."/>
            <person name="Venter E."/>
            <person name="Wang A.H."/>
            <person name="Wang X."/>
            <person name="Wang Z.-Y."/>
            <person name="Wassarman D.A."/>
            <person name="Weinstock G.M."/>
            <person name="Weissenbach J."/>
            <person name="Williams S.M."/>
            <person name="Woodage T."/>
            <person name="Worley K.C."/>
            <person name="Wu D."/>
            <person name="Yang S."/>
            <person name="Yao Q.A."/>
            <person name="Ye J."/>
            <person name="Yeh R.-F."/>
            <person name="Zaveri J.S."/>
            <person name="Zhan M."/>
            <person name="Zhang G."/>
            <person name="Zhao Q."/>
            <person name="Zheng L."/>
            <person name="Zheng X.H."/>
            <person name="Zhong F.N."/>
            <person name="Zhong W."/>
            <person name="Zhou X."/>
            <person name="Zhu S.C."/>
            <person name="Zhu X."/>
            <person name="Smith H.O."/>
            <person name="Gibbs R.A."/>
            <person name="Myers E.W."/>
            <person name="Rubin G.M."/>
            <person name="Venter J.C."/>
        </authorList>
    </citation>
    <scope>NUCLEOTIDE SEQUENCE [LARGE SCALE GENOMIC DNA]</scope>
    <source>
        <strain evidence="12">Berkeley</strain>
    </source>
</reference>
<reference evidence="12" key="2">
    <citation type="journal article" date="2002" name="Genome Biol.">
        <title>Annotation of the Drosophila melanogaster euchromatic genome: a systematic review.</title>
        <authorList>
            <person name="Misra S."/>
            <person name="Crosby M.A."/>
            <person name="Mungall C.J."/>
            <person name="Matthews B.B."/>
            <person name="Campbell K.S."/>
            <person name="Hradecky P."/>
            <person name="Huang Y."/>
            <person name="Kaminker J.S."/>
            <person name="Millburn G.H."/>
            <person name="Prochnik S.E."/>
            <person name="Smith C.D."/>
            <person name="Tupy J.L."/>
            <person name="Whitfield E.J."/>
            <person name="Bayraktaroglu L."/>
            <person name="Berman B.P."/>
            <person name="Bettencourt B.R."/>
            <person name="Celniker S.E."/>
            <person name="de Grey A.D.N.J."/>
            <person name="Drysdale R.A."/>
            <person name="Harris N.L."/>
            <person name="Richter J."/>
            <person name="Russo S."/>
            <person name="Schroeder A.J."/>
            <person name="Shu S.Q."/>
            <person name="Stapleton M."/>
            <person name="Yamada C."/>
            <person name="Ashburner M."/>
            <person name="Gelbart W.M."/>
            <person name="Rubin G.M."/>
            <person name="Lewis S.E."/>
        </authorList>
    </citation>
    <scope>GENOME REANNOTATION</scope>
    <source>
        <strain evidence="12">Berkeley</strain>
    </source>
</reference>
<reference evidence="9" key="3">
    <citation type="journal article" date="1999" name="Science">
        <title>A glial-neuronal signaling pathway revealed by mutations in a neurexin-related protein.</title>
        <authorList>
            <person name="Yuan L.L."/>
            <person name="Ganetzky B."/>
        </authorList>
    </citation>
    <scope>FUNCTION</scope>
    <scope>SUBCELLULAR LOCATION</scope>
    <scope>DEVELOPMENTAL STAGE</scope>
    <scope>DISRUPTION PHENOTYPE</scope>
</reference>
<protein>
    <recommendedName>
        <fullName evidence="11">Axotactin</fullName>
    </recommendedName>
</protein>
<comment type="function">
    <text evidence="7 9">May have serine protease inhibitor activity (Probable). Might play a role in the glial-neuronal signaling pathway that is important in establishing the electrical properties of axonal membranes (PubMed:10037607).</text>
</comment>
<comment type="subcellular location">
    <subcellularLocation>
        <location evidence="7">Cell projection</location>
        <location evidence="7">Axon</location>
    </subcellularLocation>
    <subcellularLocation>
        <location evidence="1">Membrane</location>
        <topology evidence="1">Single-pass type I membrane protein</topology>
    </subcellularLocation>
    <text evidence="7 10">Localizes to longitudinal axon tracts as well as to an axonal scaffold in the brain (PubMed:10037607). A secreted form might exist (Probable).</text>
</comment>
<comment type="alternative products">
    <event type="alternative splicing"/>
    <isoform>
        <id>M9PE65-1</id>
        <name evidence="11">C</name>
        <name evidence="11">G</name>
        <sequence type="displayed"/>
    </isoform>
    <isoform>
        <id>M9PE65-2</id>
        <name evidence="11">B</name>
        <sequence type="described" ref="VSP_061454 VSP_061461"/>
    </isoform>
    <isoform>
        <id>M9PE65-3</id>
        <name evidence="11">D</name>
        <name evidence="11">H</name>
        <sequence type="described" ref="VSP_061456 VSP_061459"/>
    </isoform>
    <isoform>
        <id>M9PE65-4</id>
        <name evidence="11">F</name>
        <sequence type="described" ref="VSP_061455 VSP_061460"/>
    </isoform>
    <isoform>
        <id>M9PE65-5</id>
        <name evidence="11">I</name>
        <sequence type="described" ref="VSP_061457 VSP_061458"/>
    </isoform>
</comment>
<comment type="developmental stage">
    <text evidence="7">Expressed in the brain and parts of the peripheral nervous system (at protein level) (PubMed:10037607). Expressed from embryonic stage 13 in the differentiating nervous system in a subset of glial cells, including longitudinal glia and segmental boundary cells (PubMed:10037607).</text>
</comment>
<comment type="disruption phenotype">
    <text evidence="7">Temperature-dependent loss of excitatory junctional potentials in the larval neuromuscular junction.</text>
</comment>
<accession>M9PE65</accession>
<accession>M9NF15</accession>
<accession>M9NFN0</accession>
<accession>M9PBP8</accession>
<accession>Q9VZ96</accession>
<sequence length="2179" mass="241567">MAFPYIWALLPLICSASGLSLPNMTSTDAVVAGGGILPILVAGNPGNLGSSNMSLSGGGGLAGSSTGGQSLPDTGGGNSAGGSPAGGSSGTGGGGSNSGISGNNSAMIQGQKSNQYEKCAGPGDPGPCKQYIYKWRYEPTTNECTNFIWGGCEGNPQNRFGTEAECLFHCIGGPHTLPPFLQSTTREPSTTESSMLLGLPYTQSPAQSPDGMGGAEGGDGTTPVPIEQRGPELTFAETGQGKTFIFAKNNTFIQMDGDIIQTFQLRLCREISFQFRTRLPHGLLVYHNVKNPDRINLDPYALYVIVEKGQLKVVHVFGKHSTSVTVGESLNRDEWHSVMVRIDVHGARLIARVDNSQEEVYLKGLNHEYNYGVSTNLPSVVLVGGLSSEEKLHGVKYITESFVGCIRNVVLSSGKAASDLLPIAPLVATKHENVNEGCSDMCESRHNLCFVGSRCINHYGGISCDCFGTHYEGEHCDIYTATIITLRGASYVSYRIYDWKDRVHSSTRRISLMFRTNFDDSALFYASGESLKHQYIAASIKNQSVHVEMDFGDNVMSTVLTDDLTRGYWHNLTILHEQRTVSIILDQQQKVLELPATASGNMLFDPEIYFGGGPELHKKKGLASHNNFVGSLKYVYYNDISILYELQRGNPKVHYHGVLEAEFVENEVNVIPITYPFATSHIWWPINHAEEFNIKFDFRSSRPGAVLAYSDVTTSAGNGFWEIRLTSDKLSFDLVPDVNNNVTHSTTIKINRATSWHSVELDYKLGEIRFTVDYRHTLSQMYGLTFNIGDKLIIGSSLKSAAMGLVGCIRDIEINGHLIEPRHVVKTERVVGEVALDNCNYIDPCKRPNTCEHGGKCFVKDDRVTCDCKHTGYIGKNCHFTKYRKTCEELALLGFTKSDVYLIDIDGNGVFPPAHVKCDFQSLENATKTIVEHNLPSQVDVRSARESDFSFNIRYREFSPHMLQELISHSLYCTQYIKYDCYRAQLELHSATWFTSSAKNLTVDFLGNVKRGACPCSVNKTCVDPNQSCNCDVKENKWNSDEGYYQDPQSLGITNMYFLQQKDMDDEAQGRITLGPLECVETNTQKYVVTFTTSQSYIEVPGWRKGDIAFSFRTTGEKAILLFQPPIRPHYPSFMVALTGDDQLTFTFTLSTGTTRELVINSHRRLNGGEWHKIWIDYNQYHVRFMINTDYQMLDLLPEEEFGPFEGSMYIGGATFDLLKKLSVKAGLIGCFRGLVVNGEILDIYSYMSVHLSEIIKDCKPSCVPSPCRNGAQCKELWSSFKCVCNNPWAHIGEFCETNINEKALTFINRESFLMRNYLSVGATPVILMHGINGERDVLKGILNQDLLINLRTYDTNALVLYANDHYNNFVHLYISLNREIVFLYNYGDEIVNLTLLDDTLMASLKSIQVAIVRGEQETRMHVNEHSVSIDRGTLLLDEYANKPWSNPEKEVLSPHRPPAPPTEYFQFHVGGYDPANLLRPNVDAPALEGYIGCVRGLKIGAQLIDLADINERNIAPTQEGVLPNCQIKCDAEPCKNGGTCQEHFAEQLSTCDCEHTSFLGEFCSEEKGADFSGESTLQRKFELPGTGRVDYVRLQLAFSSFDLRRANRIMLLMQTEAERSYYLLLAITSDGYLQLEEDRDNGQTVGARIDRNFLNSARHSVYYVRNGTQSQLFIDREQVPLSEFAARVLTTGGDAGSNRVQIGGINSTDSRFAVFKSYSGCLSNIYIQVNGHVMKPLEEYMLFTKSGADNITVINPQGVRSAQCNAKFDVSEQPTQEPMVNVSMIPEPWVEEPPARVPYIPRFVYDENKQEDSTQVVFLTLTSVFVIIVICCLLEVYRSHLAYKKRIERETDEDIIWSKEQATKMHESPGVKAGLLGGVTAGSGNGLPPYTYKALPQEDKKPGNGAPLVGILKNGSATPSQPGTPTALSKNGDIASRIEEEEEEEDEAPAQKAAEKSGENEEPPAKDTTASEIKESQAQPPEQLAKDTTDASAAPKASKETEAQAEPSEPSSQLNSAQNGQLAQMEQAARGDEVQVPSLPHPIQPPDAIFMPNLPQKAQQRQPQEHKSRHKATDDTEAPKQQQQQQQQQQSFDVATNANGSSLPASRVKNPEEPGGKSPLVPMRQHHSKVTRPPPPPTLFLENSLLQRQFANPISYLGGPRLQPRSNRTSIDSILSLD</sequence>
<feature type="signal peptide" evidence="1">
    <location>
        <begin position="1"/>
        <end position="18"/>
    </location>
</feature>
<feature type="chain" id="PRO_5015096687" description="Axotactin" evidence="1">
    <location>
        <begin position="19"/>
        <end position="2179"/>
    </location>
</feature>
<feature type="topological domain" description="Extracellular" evidence="9">
    <location>
        <begin position="19"/>
        <end position="1816"/>
    </location>
</feature>
<feature type="transmembrane region" description="Helical" evidence="1">
    <location>
        <begin position="1817"/>
        <end position="1837"/>
    </location>
</feature>
<feature type="topological domain" description="Cytoplasmic" evidence="9">
    <location>
        <begin position="1838"/>
        <end position="2179"/>
    </location>
</feature>
<feature type="domain" description="BPTI/Kunitz inhibitor" evidence="2">
    <location>
        <begin position="119"/>
        <end position="170"/>
    </location>
</feature>
<feature type="domain" description="Laminin G-like 1" evidence="4">
    <location>
        <begin position="242"/>
        <end position="438"/>
    </location>
</feature>
<feature type="domain" description="EGF-like 1" evidence="3">
    <location>
        <begin position="439"/>
        <end position="477"/>
    </location>
</feature>
<feature type="domain" description="Laminin G-like 2" evidence="4">
    <location>
        <begin position="481"/>
        <end position="664"/>
    </location>
</feature>
<feature type="domain" description="Laminin G-like 3" evidence="4">
    <location>
        <begin position="660"/>
        <end position="839"/>
    </location>
</feature>
<feature type="domain" description="EGF-like 2" evidence="3">
    <location>
        <begin position="841"/>
        <end position="879"/>
    </location>
</feature>
<feature type="domain" description="Laminin G-like 4" evidence="4">
    <location>
        <begin position="1087"/>
        <end position="1259"/>
    </location>
</feature>
<feature type="domain" description="EGF-like 3" evidence="3">
    <location>
        <begin position="1260"/>
        <end position="1297"/>
    </location>
</feature>
<feature type="domain" description="Laminin G-like 5" evidence="4">
    <location>
        <begin position="1316"/>
        <end position="1526"/>
    </location>
</feature>
<feature type="domain" description="EGF-like 4" evidence="3">
    <location>
        <begin position="1527"/>
        <end position="1565"/>
    </location>
</feature>
<feature type="domain" description="Laminin G-like 6" evidence="4">
    <location>
        <begin position="1569"/>
        <end position="1765"/>
    </location>
</feature>
<feature type="region of interest" description="Disordered" evidence="6">
    <location>
        <begin position="59"/>
        <end position="107"/>
    </location>
</feature>
<feature type="region of interest" description="Disordered" evidence="6">
    <location>
        <begin position="201"/>
        <end position="220"/>
    </location>
</feature>
<feature type="region of interest" description="Disordered" evidence="6">
    <location>
        <begin position="1891"/>
        <end position="2141"/>
    </location>
</feature>
<feature type="region of interest" description="Disordered" evidence="6">
    <location>
        <begin position="2156"/>
        <end position="2179"/>
    </location>
</feature>
<feature type="compositionally biased region" description="Gly residues" evidence="6">
    <location>
        <begin position="74"/>
        <end position="97"/>
    </location>
</feature>
<feature type="compositionally biased region" description="Gly residues" evidence="6">
    <location>
        <begin position="211"/>
        <end position="220"/>
    </location>
</feature>
<feature type="compositionally biased region" description="Polar residues" evidence="6">
    <location>
        <begin position="1916"/>
        <end position="1930"/>
    </location>
</feature>
<feature type="compositionally biased region" description="Acidic residues" evidence="6">
    <location>
        <begin position="1940"/>
        <end position="1949"/>
    </location>
</feature>
<feature type="compositionally biased region" description="Basic and acidic residues" evidence="6">
    <location>
        <begin position="1954"/>
        <end position="1966"/>
    </location>
</feature>
<feature type="compositionally biased region" description="Polar residues" evidence="6">
    <location>
        <begin position="1969"/>
        <end position="1981"/>
    </location>
</feature>
<feature type="compositionally biased region" description="Polar residues" evidence="6">
    <location>
        <begin position="2010"/>
        <end position="2025"/>
    </location>
</feature>
<feature type="compositionally biased region" description="Basic and acidic residues" evidence="6">
    <location>
        <begin position="2064"/>
        <end position="2079"/>
    </location>
</feature>
<feature type="compositionally biased region" description="Low complexity" evidence="6">
    <location>
        <begin position="2082"/>
        <end position="2091"/>
    </location>
</feature>
<feature type="compositionally biased region" description="Polar residues" evidence="6">
    <location>
        <begin position="2092"/>
        <end position="2105"/>
    </location>
</feature>
<feature type="compositionally biased region" description="Polar residues" evidence="6">
    <location>
        <begin position="2165"/>
        <end position="2179"/>
    </location>
</feature>
<feature type="glycosylation site" description="N-linked (GlcNAc...) asparagine" evidence="5">
    <location>
        <position position="23"/>
    </location>
</feature>
<feature type="glycosylation site" description="N-linked (GlcNAc...) asparagine" evidence="5">
    <location>
        <position position="52"/>
    </location>
</feature>
<feature type="glycosylation site" description="N-linked (GlcNAc...) asparagine" evidence="5">
    <location>
        <position position="103"/>
    </location>
</feature>
<feature type="glycosylation site" description="N-linked (GlcNAc...) asparagine" evidence="5">
    <location>
        <position position="249"/>
    </location>
</feature>
<feature type="glycosylation site" description="N-linked (GlcNAc...) asparagine" evidence="5">
    <location>
        <position position="542"/>
    </location>
</feature>
<feature type="glycosylation site" description="N-linked (GlcNAc...) asparagine" evidence="5">
    <location>
        <position position="571"/>
    </location>
</feature>
<feature type="glycosylation site" description="N-linked (GlcNAc...) asparagine" evidence="5">
    <location>
        <position position="741"/>
    </location>
</feature>
<feature type="glycosylation site" description="N-linked (GlcNAc...) asparagine" evidence="5">
    <location>
        <position position="925"/>
    </location>
</feature>
<feature type="glycosylation site" description="N-linked (GlcNAc...) asparagine" evidence="5">
    <location>
        <position position="1000"/>
    </location>
</feature>
<feature type="glycosylation site" description="N-linked (GlcNAc...) asparagine" evidence="5">
    <location>
        <position position="1019"/>
    </location>
</feature>
<feature type="glycosylation site" description="N-linked (GlcNAc...) asparagine" evidence="5">
    <location>
        <position position="1026"/>
    </location>
</feature>
<feature type="glycosylation site" description="N-linked (GlcNAc...) asparagine" evidence="5">
    <location>
        <position position="1393"/>
    </location>
</feature>
<feature type="glycosylation site" description="N-linked (GlcNAc...) asparagine" evidence="5">
    <location>
        <position position="1667"/>
    </location>
</feature>
<feature type="glycosylation site" description="N-linked (GlcNAc...) asparagine" evidence="5">
    <location>
        <position position="1707"/>
    </location>
</feature>
<feature type="glycosylation site" description="N-linked (GlcNAc...) asparagine" evidence="5">
    <location>
        <position position="1751"/>
    </location>
</feature>
<feature type="glycosylation site" description="N-linked (GlcNAc...) asparagine" evidence="5">
    <location>
        <position position="1782"/>
    </location>
</feature>
<feature type="disulfide bond" evidence="2">
    <location>
        <begin position="119"/>
        <end position="170"/>
    </location>
</feature>
<feature type="disulfide bond" evidence="2">
    <location>
        <begin position="128"/>
        <end position="152"/>
    </location>
</feature>
<feature type="disulfide bond" evidence="2">
    <location>
        <begin position="144"/>
        <end position="166"/>
    </location>
</feature>
<feature type="disulfide bond" evidence="4">
    <location>
        <begin position="405"/>
        <end position="438"/>
    </location>
</feature>
<feature type="disulfide bond" evidence="3">
    <location>
        <begin position="442"/>
        <end position="455"/>
    </location>
</feature>
<feature type="disulfide bond" evidence="3">
    <location>
        <begin position="449"/>
        <end position="464"/>
    </location>
</feature>
<feature type="disulfide bond" evidence="3">
    <location>
        <begin position="466"/>
        <end position="476"/>
    </location>
</feature>
<feature type="disulfide bond" evidence="4">
    <location>
        <begin position="808"/>
        <end position="839"/>
    </location>
</feature>
<feature type="disulfide bond" evidence="3">
    <location>
        <begin position="845"/>
        <end position="857"/>
    </location>
</feature>
<feature type="disulfide bond" evidence="3">
    <location>
        <begin position="851"/>
        <end position="866"/>
    </location>
</feature>
<feature type="disulfide bond" evidence="3">
    <location>
        <begin position="868"/>
        <end position="878"/>
    </location>
</feature>
<feature type="disulfide bond" evidence="4">
    <location>
        <begin position="1231"/>
        <end position="1259"/>
    </location>
</feature>
<feature type="disulfide bond" evidence="3">
    <location>
        <begin position="1263"/>
        <end position="1274"/>
    </location>
</feature>
<feature type="disulfide bond" evidence="3">
    <location>
        <begin position="1268"/>
        <end position="1283"/>
    </location>
</feature>
<feature type="disulfide bond" evidence="3">
    <location>
        <begin position="1285"/>
        <end position="1296"/>
    </location>
</feature>
<feature type="disulfide bond" evidence="4">
    <location>
        <begin position="1494"/>
        <end position="1526"/>
    </location>
</feature>
<feature type="disulfide bond" evidence="3">
    <location>
        <begin position="1530"/>
        <end position="1541"/>
    </location>
</feature>
<feature type="disulfide bond" evidence="3">
    <location>
        <begin position="1535"/>
        <end position="1552"/>
    </location>
</feature>
<feature type="disulfide bond" evidence="3">
    <location>
        <begin position="1554"/>
        <end position="1564"/>
    </location>
</feature>
<feature type="disulfide bond" evidence="4">
    <location>
        <begin position="1722"/>
        <end position="1765"/>
    </location>
</feature>
<feature type="splice variant" id="VSP_061454" description="In isoform B." evidence="9">
    <original>HPIQPPDAIFMPNLPQKAQQRQPQEHKSRHKATDDTEAPKQQQQQQQQQQSFDVATNANGSSLPASRVKNPEEPGGKSPLVPMRQHHSKVTRPPPPPTLFLENSLLQ</original>
    <variation>QQHEMQKQLPPQRQLSQRGVGIQQQTSSKRRKPVGSGGAGGATVVGPATVRRQVSWGPPIVAETDVDLANNSSGNGNGNGNGNGNRKAGGKQNGYHGVNRRATTTRN</variation>
    <location>
        <begin position="2042"/>
        <end position="2148"/>
    </location>
</feature>
<feature type="splice variant" id="VSP_061455" description="In isoform F." evidence="9">
    <original>HPIQPPDAIFMPNLPQKAQQRQPQEHKSRHKATDDTEAPKQQQQQQQQQQSFDVATNANGSSLPASRVKNPEEPGGKSPLVPMRQHHSKVTRPPPPPTLFLENSLL</original>
    <variation>QHEMQKQLPPQRQLSQRGVGIQQQTSSKRRKPVGSGGAGGATVVGPATVRRQVSWGPPIVAETDVDLANNSSGNGNGNGNGNGNRKAGGKQNGYHGVNRRATTTRN</variation>
    <location>
        <begin position="2042"/>
        <end position="2147"/>
    </location>
</feature>
<feature type="splice variant" id="VSP_061456" description="In isoform D." evidence="9">
    <original>HPIQPPDAIFMPNLPQKAQQRQPQEHKSR</original>
    <variation>VSRGSQPTVNLVRMAPIATISETNLHGLG</variation>
    <location>
        <begin position="2042"/>
        <end position="2070"/>
    </location>
</feature>
<feature type="splice variant" id="VSP_061457" description="In isoform I." evidence="9">
    <original>HPIQPP</original>
    <variation>PNRIKP</variation>
    <location>
        <begin position="2042"/>
        <end position="2047"/>
    </location>
</feature>
<feature type="splice variant" id="VSP_061458" description="In isoform I." evidence="9">
    <location>
        <begin position="2048"/>
        <end position="2179"/>
    </location>
</feature>
<feature type="splice variant" id="VSP_061459" description="In isoform D." evidence="9">
    <location>
        <begin position="2071"/>
        <end position="2179"/>
    </location>
</feature>
<feature type="splice variant" id="VSP_061460" description="In isoform F." evidence="9">
    <location>
        <begin position="2148"/>
        <end position="2179"/>
    </location>
</feature>
<feature type="splice variant" id="VSP_061461" description="In isoform B." evidence="9">
    <location>
        <begin position="2149"/>
        <end position="2179"/>
    </location>
</feature>